<dbReference type="EMBL" id="AE014075">
    <property type="protein sequence ID" value="AAN78610.1"/>
    <property type="molecule type" value="Genomic_DNA"/>
</dbReference>
<dbReference type="RefSeq" id="WP_000588474.1">
    <property type="nucleotide sequence ID" value="NZ_CP051263.1"/>
</dbReference>
<dbReference type="SMR" id="P0ABH1"/>
<dbReference type="STRING" id="199310.c0112"/>
<dbReference type="GeneID" id="93777340"/>
<dbReference type="KEGG" id="ecc:c0112"/>
<dbReference type="eggNOG" id="COG0849">
    <property type="taxonomic scope" value="Bacteria"/>
</dbReference>
<dbReference type="HOGENOM" id="CLU_037850_3_2_6"/>
<dbReference type="BioCyc" id="ECOL199310:C0112-MONOMER"/>
<dbReference type="Proteomes" id="UP000001410">
    <property type="component" value="Chromosome"/>
</dbReference>
<dbReference type="GO" id="GO:0032153">
    <property type="term" value="C:cell division site"/>
    <property type="evidence" value="ECO:0007669"/>
    <property type="project" value="UniProtKB-UniRule"/>
</dbReference>
<dbReference type="GO" id="GO:0009898">
    <property type="term" value="C:cytoplasmic side of plasma membrane"/>
    <property type="evidence" value="ECO:0007669"/>
    <property type="project" value="UniProtKB-UniRule"/>
</dbReference>
<dbReference type="GO" id="GO:0043093">
    <property type="term" value="P:FtsZ-dependent cytokinesis"/>
    <property type="evidence" value="ECO:0007669"/>
    <property type="project" value="UniProtKB-UniRule"/>
</dbReference>
<dbReference type="CDD" id="cd24048">
    <property type="entry name" value="ASKHA_NBD_FtsA"/>
    <property type="match status" value="1"/>
</dbReference>
<dbReference type="FunFam" id="3.30.1490.110:FF:000001">
    <property type="entry name" value="Cell division protein FtsA"/>
    <property type="match status" value="1"/>
</dbReference>
<dbReference type="FunFam" id="3.30.420.40:FF:000030">
    <property type="entry name" value="Cell division protein FtsA"/>
    <property type="match status" value="1"/>
</dbReference>
<dbReference type="Gene3D" id="3.30.1490.110">
    <property type="match status" value="1"/>
</dbReference>
<dbReference type="Gene3D" id="3.30.420.40">
    <property type="match status" value="1"/>
</dbReference>
<dbReference type="HAMAP" id="MF_02033">
    <property type="entry name" value="FtsA"/>
    <property type="match status" value="1"/>
</dbReference>
<dbReference type="InterPro" id="IPR043129">
    <property type="entry name" value="ATPase_NBD"/>
</dbReference>
<dbReference type="InterPro" id="IPR020823">
    <property type="entry name" value="Cell_div_FtsA"/>
</dbReference>
<dbReference type="InterPro" id="IPR050696">
    <property type="entry name" value="FtsA/MreB"/>
</dbReference>
<dbReference type="InterPro" id="IPR003494">
    <property type="entry name" value="SHS2_FtsA"/>
</dbReference>
<dbReference type="NCBIfam" id="TIGR01174">
    <property type="entry name" value="ftsA"/>
    <property type="match status" value="1"/>
</dbReference>
<dbReference type="NCBIfam" id="NF007009">
    <property type="entry name" value="PRK09472.1"/>
    <property type="match status" value="1"/>
</dbReference>
<dbReference type="PANTHER" id="PTHR32432:SF4">
    <property type="entry name" value="CELL DIVISION PROTEIN FTSA"/>
    <property type="match status" value="1"/>
</dbReference>
<dbReference type="PANTHER" id="PTHR32432">
    <property type="entry name" value="CELL DIVISION PROTEIN FTSA-RELATED"/>
    <property type="match status" value="1"/>
</dbReference>
<dbReference type="Pfam" id="PF14450">
    <property type="entry name" value="FtsA"/>
    <property type="match status" value="1"/>
</dbReference>
<dbReference type="Pfam" id="PF02491">
    <property type="entry name" value="SHS2_FTSA"/>
    <property type="match status" value="1"/>
</dbReference>
<dbReference type="PIRSF" id="PIRSF003101">
    <property type="entry name" value="FtsA"/>
    <property type="match status" value="1"/>
</dbReference>
<dbReference type="SMART" id="SM00842">
    <property type="entry name" value="FtsA"/>
    <property type="match status" value="1"/>
</dbReference>
<dbReference type="SUPFAM" id="SSF53067">
    <property type="entry name" value="Actin-like ATPase domain"/>
    <property type="match status" value="2"/>
</dbReference>
<accession>P0ABH1</accession>
<accession>P06137</accession>
<accession>Q47229</accession>
<organism>
    <name type="scientific">Escherichia coli O6:H1 (strain CFT073 / ATCC 700928 / UPEC)</name>
    <dbReference type="NCBI Taxonomy" id="199310"/>
    <lineage>
        <taxon>Bacteria</taxon>
        <taxon>Pseudomonadati</taxon>
        <taxon>Pseudomonadota</taxon>
        <taxon>Gammaproteobacteria</taxon>
        <taxon>Enterobacterales</taxon>
        <taxon>Enterobacteriaceae</taxon>
        <taxon>Escherichia</taxon>
    </lineage>
</organism>
<comment type="function">
    <text evidence="1">Cell division protein that is involved in the assembly of the Z ring. May serve as a membrane anchor for the Z ring.</text>
</comment>
<comment type="subunit">
    <text evidence="1">Self-interacts. Interacts with FtsZ.</text>
</comment>
<comment type="subcellular location">
    <subcellularLocation>
        <location evidence="1">Cell inner membrane</location>
        <topology evidence="1">Peripheral membrane protein</topology>
        <orientation evidence="1">Cytoplasmic side</orientation>
    </subcellularLocation>
    <text evidence="1">Localizes to the Z ring in an FtsZ-dependent manner. Targeted to the membrane through a conserved C-terminal amphipathic helix.</text>
</comment>
<comment type="similarity">
    <text evidence="1">Belongs to the FtsA/MreB family.</text>
</comment>
<feature type="chain" id="PRO_0000062736" description="Cell division protein FtsA">
    <location>
        <begin position="1"/>
        <end position="420"/>
    </location>
</feature>
<name>FTSA_ECOL6</name>
<reference key="1">
    <citation type="journal article" date="2002" name="Proc. Natl. Acad. Sci. U.S.A.">
        <title>Extensive mosaic structure revealed by the complete genome sequence of uropathogenic Escherichia coli.</title>
        <authorList>
            <person name="Welch R.A."/>
            <person name="Burland V."/>
            <person name="Plunkett G. III"/>
            <person name="Redford P."/>
            <person name="Roesch P."/>
            <person name="Rasko D."/>
            <person name="Buckles E.L."/>
            <person name="Liou S.-R."/>
            <person name="Boutin A."/>
            <person name="Hackett J."/>
            <person name="Stroud D."/>
            <person name="Mayhew G.F."/>
            <person name="Rose D.J."/>
            <person name="Zhou S."/>
            <person name="Schwartz D.C."/>
            <person name="Perna N.T."/>
            <person name="Mobley H.L.T."/>
            <person name="Donnenberg M.S."/>
            <person name="Blattner F.R."/>
        </authorList>
    </citation>
    <scope>NUCLEOTIDE SEQUENCE [LARGE SCALE GENOMIC DNA]</scope>
    <source>
        <strain>CFT073 / ATCC 700928 / UPEC</strain>
    </source>
</reference>
<sequence length="420" mass="45330">MIKATDRKLVVGLEIGTAKVAALVGEVLPDGMVNIIGVGSCPSRGMDKGGVNDLESVVKCVQRAIDQAELMADCQISSVYLALSGKHISCQNEIGMVPISEEEVTQEDVENVVHTAKSVRVRDEHRVLHVIPQEYAIDYQEGIKNPVGLSGVRMQAKVHLITCHNDMAKNIVKAVERCGLKVDQLIFAGLASSYSVLTEDERELGVCVVDIGGGTMDIAVYTGGALRHTKVIPYAGNVVTSDIAYAFGTPPSDAEAIKVRHGCALGSIVGKDESVEVPSVGGRPPRSLQRQTLAEVIEPRYTELLNLVNEEILQLQEKLRQQGVKHHLAAGIVLTGGAAQIEGLAACAQRVFHTQVRIGAPLNITGLTDYAQEPYYSTAVGLLHYGKESHLNGEAEVEKRVTASVGSWIKRLNSWLRKEF</sequence>
<proteinExistence type="inferred from homology"/>
<gene>
    <name evidence="1" type="primary">ftsA</name>
    <name type="ordered locus">c0112</name>
</gene>
<keyword id="KW-0131">Cell cycle</keyword>
<keyword id="KW-0132">Cell division</keyword>
<keyword id="KW-0997">Cell inner membrane</keyword>
<keyword id="KW-1003">Cell membrane</keyword>
<keyword id="KW-0472">Membrane</keyword>
<keyword id="KW-1185">Reference proteome</keyword>
<protein>
    <recommendedName>
        <fullName evidence="1">Cell division protein FtsA</fullName>
    </recommendedName>
</protein>
<evidence type="ECO:0000255" key="1">
    <source>
        <dbReference type="HAMAP-Rule" id="MF_02033"/>
    </source>
</evidence>